<proteinExistence type="inferred from homology"/>
<evidence type="ECO:0000303" key="1">
    <source>
    </source>
</evidence>
<evidence type="ECO:0000305" key="2"/>
<dbReference type="EMBL" id="AB016875">
    <property type="protein sequence ID" value="BAB11627.1"/>
    <property type="molecule type" value="Genomic_DNA"/>
</dbReference>
<dbReference type="EMBL" id="CP002688">
    <property type="protein sequence ID" value="AED94990.1"/>
    <property type="molecule type" value="Genomic_DNA"/>
</dbReference>
<dbReference type="RefSeq" id="NP_199177.1">
    <property type="nucleotide sequence ID" value="NM_123730.2"/>
</dbReference>
<dbReference type="SMR" id="Q9FIX6"/>
<dbReference type="BioGRID" id="19634">
    <property type="interactions" value="87"/>
</dbReference>
<dbReference type="FunCoup" id="Q9FIX6">
    <property type="interactions" value="2708"/>
</dbReference>
<dbReference type="STRING" id="3702.Q9FIX6"/>
<dbReference type="PaxDb" id="3702-AT5G43640.1"/>
<dbReference type="ProteomicsDB" id="226779"/>
<dbReference type="EnsemblPlants" id="AT5G43640.1">
    <property type="protein sequence ID" value="AT5G43640.1"/>
    <property type="gene ID" value="AT5G43640"/>
</dbReference>
<dbReference type="GeneID" id="834384"/>
<dbReference type="Gramene" id="AT5G43640.1">
    <property type="protein sequence ID" value="AT5G43640.1"/>
    <property type="gene ID" value="AT5G43640"/>
</dbReference>
<dbReference type="KEGG" id="ath:AT5G43640"/>
<dbReference type="Araport" id="AT5G43640"/>
<dbReference type="TAIR" id="AT5G43640"/>
<dbReference type="eggNOG" id="KOG0898">
    <property type="taxonomic scope" value="Eukaryota"/>
</dbReference>
<dbReference type="HOGENOM" id="CLU_097347_1_0_1"/>
<dbReference type="InParanoid" id="Q9FIX6"/>
<dbReference type="OMA" id="IILEMIG"/>
<dbReference type="PhylomeDB" id="Q9FIX6"/>
<dbReference type="PRO" id="PR:Q9FIX6"/>
<dbReference type="Proteomes" id="UP000006548">
    <property type="component" value="Chromosome 5"/>
</dbReference>
<dbReference type="ExpressionAtlas" id="Q9FIX6">
    <property type="expression patterns" value="baseline and differential"/>
</dbReference>
<dbReference type="GO" id="GO:0022627">
    <property type="term" value="C:cytosolic small ribosomal subunit"/>
    <property type="evidence" value="ECO:0007005"/>
    <property type="project" value="TAIR"/>
</dbReference>
<dbReference type="GO" id="GO:0003723">
    <property type="term" value="F:RNA binding"/>
    <property type="evidence" value="ECO:0007669"/>
    <property type="project" value="InterPro"/>
</dbReference>
<dbReference type="GO" id="GO:0003735">
    <property type="term" value="F:structural constituent of ribosome"/>
    <property type="evidence" value="ECO:0000314"/>
    <property type="project" value="CAFA"/>
</dbReference>
<dbReference type="GO" id="GO:0006412">
    <property type="term" value="P:translation"/>
    <property type="evidence" value="ECO:0007669"/>
    <property type="project" value="InterPro"/>
</dbReference>
<dbReference type="FunFam" id="3.30.860.10:FF:000002">
    <property type="entry name" value="40S ribosomal protein S15"/>
    <property type="match status" value="1"/>
</dbReference>
<dbReference type="Gene3D" id="3.30.860.10">
    <property type="entry name" value="30s Ribosomal Protein S19, Chain A"/>
    <property type="match status" value="1"/>
</dbReference>
<dbReference type="HAMAP" id="MF_00531">
    <property type="entry name" value="Ribosomal_uS19"/>
    <property type="match status" value="1"/>
</dbReference>
<dbReference type="InterPro" id="IPR002222">
    <property type="entry name" value="Ribosomal_uS19"/>
</dbReference>
<dbReference type="InterPro" id="IPR020934">
    <property type="entry name" value="Ribosomal_uS19_CS"/>
</dbReference>
<dbReference type="InterPro" id="IPR005713">
    <property type="entry name" value="Ribosomal_uS19_euk/arc"/>
</dbReference>
<dbReference type="InterPro" id="IPR023575">
    <property type="entry name" value="Ribosomal_uS19_SF"/>
</dbReference>
<dbReference type="NCBIfam" id="NF003121">
    <property type="entry name" value="PRK04038.1"/>
    <property type="match status" value="1"/>
</dbReference>
<dbReference type="NCBIfam" id="TIGR01025">
    <property type="entry name" value="uS19_arch"/>
    <property type="match status" value="1"/>
</dbReference>
<dbReference type="PANTHER" id="PTHR11880">
    <property type="entry name" value="RIBOSOMAL PROTEIN S19P FAMILY MEMBER"/>
    <property type="match status" value="1"/>
</dbReference>
<dbReference type="PANTHER" id="PTHR11880:SF71">
    <property type="entry name" value="SMALL RIBOSOMAL SUBUNIT PROTEIN US19W"/>
    <property type="match status" value="1"/>
</dbReference>
<dbReference type="Pfam" id="PF00203">
    <property type="entry name" value="Ribosomal_S19"/>
    <property type="match status" value="1"/>
</dbReference>
<dbReference type="PIRSF" id="PIRSF002144">
    <property type="entry name" value="Ribosomal_S19"/>
    <property type="match status" value="1"/>
</dbReference>
<dbReference type="PRINTS" id="PR00975">
    <property type="entry name" value="RIBOSOMALS19"/>
</dbReference>
<dbReference type="SUPFAM" id="SSF54570">
    <property type="entry name" value="Ribosomal protein S19"/>
    <property type="match status" value="1"/>
</dbReference>
<dbReference type="PROSITE" id="PS00323">
    <property type="entry name" value="RIBOSOMAL_S19"/>
    <property type="match status" value="1"/>
</dbReference>
<accession>Q9FIX6</accession>
<feature type="chain" id="PRO_0000130043" description="Small ribosomal subunit protein uS19w">
    <location>
        <begin position="1"/>
        <end position="149"/>
    </location>
</feature>
<name>RS155_ARATH</name>
<gene>
    <name type="primary">RPS15E</name>
    <name type="ordered locus">At5g43640</name>
    <name type="ORF">K9D7.14</name>
</gene>
<sequence>MEPEVVAAGIVKKRTFKKFSFRGVDLDALLDMSIEDLVKHFSSRIRRRFSRGLTRKPMALIKKLRKAKMEAPAGEKPASVRTHLRNMIIVPEMIGSIIGVYNGKTFNQVEIKPEMIGHYLAEFSISYKPVKHGRPGVGATNSSRFIPLK</sequence>
<reference key="1">
    <citation type="journal article" date="1998" name="DNA Res.">
        <title>Structural analysis of Arabidopsis thaliana chromosome 5. VIII. Sequence features of the regions of 1,081,958 bp covered by seventeen physically assigned P1 and TAC clones.</title>
        <authorList>
            <person name="Asamizu E."/>
            <person name="Sato S."/>
            <person name="Kaneko T."/>
            <person name="Nakamura Y."/>
            <person name="Kotani H."/>
            <person name="Miyajima N."/>
            <person name="Tabata S."/>
        </authorList>
    </citation>
    <scope>NUCLEOTIDE SEQUENCE [LARGE SCALE GENOMIC DNA]</scope>
    <source>
        <strain>cv. Columbia</strain>
    </source>
</reference>
<reference key="2">
    <citation type="journal article" date="2017" name="Plant J.">
        <title>Araport11: a complete reannotation of the Arabidopsis thaliana reference genome.</title>
        <authorList>
            <person name="Cheng C.Y."/>
            <person name="Krishnakumar V."/>
            <person name="Chan A.P."/>
            <person name="Thibaud-Nissen F."/>
            <person name="Schobel S."/>
            <person name="Town C.D."/>
        </authorList>
    </citation>
    <scope>GENOME REANNOTATION</scope>
    <source>
        <strain>cv. Columbia</strain>
    </source>
</reference>
<reference key="3">
    <citation type="journal article" date="2001" name="Plant Physiol.">
        <title>The organization of cytoplasmic ribosomal protein genes in the Arabidopsis genome.</title>
        <authorList>
            <person name="Barakat A."/>
            <person name="Szick-Miranda K."/>
            <person name="Chang I.-F."/>
            <person name="Guyot R."/>
            <person name="Blanc G."/>
            <person name="Cooke R."/>
            <person name="Delseny M."/>
            <person name="Bailey-Serres J."/>
        </authorList>
    </citation>
    <scope>GENE FAMILY ORGANIZATION</scope>
    <scope>NOMENCLATURE</scope>
</reference>
<reference key="4">
    <citation type="journal article" date="2023" name="Plant Cell">
        <title>An updated nomenclature for plant ribosomal protein genes.</title>
        <authorList>
            <person name="Scarpin M.R."/>
            <person name="Busche M."/>
            <person name="Martinez R.E."/>
            <person name="Harper L.C."/>
            <person name="Reiser L."/>
            <person name="Szakonyi D."/>
            <person name="Merchante C."/>
            <person name="Lan T."/>
            <person name="Xiong W."/>
            <person name="Mo B."/>
            <person name="Tang G."/>
            <person name="Chen X."/>
            <person name="Bailey-Serres J."/>
            <person name="Browning K.S."/>
            <person name="Brunkard J.O."/>
        </authorList>
    </citation>
    <scope>NOMENCLATURE</scope>
</reference>
<protein>
    <recommendedName>
        <fullName evidence="1">Small ribosomal subunit protein uS19w</fullName>
    </recommendedName>
    <alternativeName>
        <fullName>40S ribosomal protein S15-5</fullName>
    </alternativeName>
</protein>
<organism>
    <name type="scientific">Arabidopsis thaliana</name>
    <name type="common">Mouse-ear cress</name>
    <dbReference type="NCBI Taxonomy" id="3702"/>
    <lineage>
        <taxon>Eukaryota</taxon>
        <taxon>Viridiplantae</taxon>
        <taxon>Streptophyta</taxon>
        <taxon>Embryophyta</taxon>
        <taxon>Tracheophyta</taxon>
        <taxon>Spermatophyta</taxon>
        <taxon>Magnoliopsida</taxon>
        <taxon>eudicotyledons</taxon>
        <taxon>Gunneridae</taxon>
        <taxon>Pentapetalae</taxon>
        <taxon>rosids</taxon>
        <taxon>malvids</taxon>
        <taxon>Brassicales</taxon>
        <taxon>Brassicaceae</taxon>
        <taxon>Camelineae</taxon>
        <taxon>Arabidopsis</taxon>
    </lineage>
</organism>
<comment type="subcellular location">
    <subcellularLocation>
        <location>Cytoplasm</location>
    </subcellularLocation>
</comment>
<comment type="similarity">
    <text evidence="2">Belongs to the universal ribosomal protein uS19 family.</text>
</comment>
<keyword id="KW-0963">Cytoplasm</keyword>
<keyword id="KW-1185">Reference proteome</keyword>
<keyword id="KW-0687">Ribonucleoprotein</keyword>
<keyword id="KW-0689">Ribosomal protein</keyword>